<sequence length="91" mass="10121">MSEPDVKSHKIEFPCDDYPIKVIGDTVVGFKDTVIEILSKHAKVDLSTLAERQSKEGKYTTVQLHIVAESENQLHDINSALRATGIVKMVL</sequence>
<gene>
    <name type="ordered locus">Pput_4677</name>
</gene>
<proteinExistence type="inferred from homology"/>
<organism>
    <name type="scientific">Pseudomonas putida (strain ATCC 700007 / DSM 6899 / JCM 31910 / BCRC 17059 / LMG 24140 / F1)</name>
    <dbReference type="NCBI Taxonomy" id="351746"/>
    <lineage>
        <taxon>Bacteria</taxon>
        <taxon>Pseudomonadati</taxon>
        <taxon>Pseudomonadota</taxon>
        <taxon>Gammaproteobacteria</taxon>
        <taxon>Pseudomonadales</taxon>
        <taxon>Pseudomonadaceae</taxon>
        <taxon>Pseudomonas</taxon>
    </lineage>
</organism>
<accession>A5W9I7</accession>
<evidence type="ECO:0000255" key="1">
    <source>
        <dbReference type="HAMAP-Rule" id="MF_00659"/>
    </source>
</evidence>
<protein>
    <recommendedName>
        <fullName evidence="1">UPF0250 protein Pput_4677</fullName>
    </recommendedName>
</protein>
<comment type="similarity">
    <text evidence="1">Belongs to the UPF0250 family.</text>
</comment>
<name>Y4677_PSEP1</name>
<dbReference type="EMBL" id="CP000712">
    <property type="protein sequence ID" value="ABQ80797.1"/>
    <property type="molecule type" value="Genomic_DNA"/>
</dbReference>
<dbReference type="SMR" id="A5W9I7"/>
<dbReference type="KEGG" id="ppf:Pput_4677"/>
<dbReference type="eggNOG" id="COG2921">
    <property type="taxonomic scope" value="Bacteria"/>
</dbReference>
<dbReference type="HOGENOM" id="CLU_161438_1_0_6"/>
<dbReference type="GO" id="GO:0005829">
    <property type="term" value="C:cytosol"/>
    <property type="evidence" value="ECO:0007669"/>
    <property type="project" value="TreeGrafter"/>
</dbReference>
<dbReference type="Gene3D" id="3.30.70.260">
    <property type="match status" value="1"/>
</dbReference>
<dbReference type="HAMAP" id="MF_00659">
    <property type="entry name" value="UPF0250"/>
    <property type="match status" value="1"/>
</dbReference>
<dbReference type="InterPro" id="IPR007454">
    <property type="entry name" value="UPF0250_YbeD-like"/>
</dbReference>
<dbReference type="InterPro" id="IPR027471">
    <property type="entry name" value="YbeD-like_sf"/>
</dbReference>
<dbReference type="NCBIfam" id="NF001486">
    <property type="entry name" value="PRK00341.1"/>
    <property type="match status" value="1"/>
</dbReference>
<dbReference type="PANTHER" id="PTHR38036">
    <property type="entry name" value="UPF0250 PROTEIN YBED"/>
    <property type="match status" value="1"/>
</dbReference>
<dbReference type="PANTHER" id="PTHR38036:SF1">
    <property type="entry name" value="UPF0250 PROTEIN YBED"/>
    <property type="match status" value="1"/>
</dbReference>
<dbReference type="Pfam" id="PF04359">
    <property type="entry name" value="DUF493"/>
    <property type="match status" value="1"/>
</dbReference>
<dbReference type="SUPFAM" id="SSF117991">
    <property type="entry name" value="YbeD/HP0495-like"/>
    <property type="match status" value="1"/>
</dbReference>
<reference key="1">
    <citation type="submission" date="2007-05" db="EMBL/GenBank/DDBJ databases">
        <title>Complete sequence of Pseudomonas putida F1.</title>
        <authorList>
            <consortium name="US DOE Joint Genome Institute"/>
            <person name="Copeland A."/>
            <person name="Lucas S."/>
            <person name="Lapidus A."/>
            <person name="Barry K."/>
            <person name="Detter J.C."/>
            <person name="Glavina del Rio T."/>
            <person name="Hammon N."/>
            <person name="Israni S."/>
            <person name="Dalin E."/>
            <person name="Tice H."/>
            <person name="Pitluck S."/>
            <person name="Chain P."/>
            <person name="Malfatti S."/>
            <person name="Shin M."/>
            <person name="Vergez L."/>
            <person name="Schmutz J."/>
            <person name="Larimer F."/>
            <person name="Land M."/>
            <person name="Hauser L."/>
            <person name="Kyrpides N."/>
            <person name="Lykidis A."/>
            <person name="Parales R."/>
            <person name="Richardson P."/>
        </authorList>
    </citation>
    <scope>NUCLEOTIDE SEQUENCE [LARGE SCALE GENOMIC DNA]</scope>
    <source>
        <strain>ATCC 700007 / DSM 6899 / JCM 31910 / BCRC 17059 / LMG 24140 / F1</strain>
    </source>
</reference>
<feature type="chain" id="PRO_1000061883" description="UPF0250 protein Pput_4677">
    <location>
        <begin position="1"/>
        <end position="91"/>
    </location>
</feature>